<gene>
    <name evidence="1" type="primary">tsf</name>
    <name type="ordered locus">amb2497</name>
</gene>
<proteinExistence type="inferred from homology"/>
<protein>
    <recommendedName>
        <fullName evidence="1">Elongation factor Ts</fullName>
        <shortName evidence="1">EF-Ts</shortName>
    </recommendedName>
</protein>
<comment type="function">
    <text evidence="1">Associates with the EF-Tu.GDP complex and induces the exchange of GDP to GTP. It remains bound to the aminoacyl-tRNA.EF-Tu.GTP complex up to the GTP hydrolysis stage on the ribosome.</text>
</comment>
<comment type="subcellular location">
    <subcellularLocation>
        <location evidence="1">Cytoplasm</location>
    </subcellularLocation>
</comment>
<comment type="similarity">
    <text evidence="1">Belongs to the EF-Ts family.</text>
</comment>
<dbReference type="EMBL" id="AP007255">
    <property type="protein sequence ID" value="BAE51301.1"/>
    <property type="molecule type" value="Genomic_DNA"/>
</dbReference>
<dbReference type="RefSeq" id="WP_011384878.1">
    <property type="nucleotide sequence ID" value="NC_007626.1"/>
</dbReference>
<dbReference type="SMR" id="Q2W4C4"/>
<dbReference type="STRING" id="342108.amb2497"/>
<dbReference type="KEGG" id="mag:amb2497"/>
<dbReference type="HOGENOM" id="CLU_047155_2_0_5"/>
<dbReference type="OrthoDB" id="9808348at2"/>
<dbReference type="Proteomes" id="UP000007058">
    <property type="component" value="Chromosome"/>
</dbReference>
<dbReference type="GO" id="GO:0005737">
    <property type="term" value="C:cytoplasm"/>
    <property type="evidence" value="ECO:0007669"/>
    <property type="project" value="UniProtKB-SubCell"/>
</dbReference>
<dbReference type="GO" id="GO:0003746">
    <property type="term" value="F:translation elongation factor activity"/>
    <property type="evidence" value="ECO:0007669"/>
    <property type="project" value="UniProtKB-UniRule"/>
</dbReference>
<dbReference type="CDD" id="cd14275">
    <property type="entry name" value="UBA_EF-Ts"/>
    <property type="match status" value="1"/>
</dbReference>
<dbReference type="FunFam" id="1.10.286.20:FF:000001">
    <property type="entry name" value="Elongation factor Ts"/>
    <property type="match status" value="1"/>
</dbReference>
<dbReference type="FunFam" id="1.10.8.10:FF:000001">
    <property type="entry name" value="Elongation factor Ts"/>
    <property type="match status" value="1"/>
</dbReference>
<dbReference type="Gene3D" id="1.10.286.20">
    <property type="match status" value="1"/>
</dbReference>
<dbReference type="Gene3D" id="1.10.8.10">
    <property type="entry name" value="DNA helicase RuvA subunit, C-terminal domain"/>
    <property type="match status" value="1"/>
</dbReference>
<dbReference type="Gene3D" id="3.30.479.20">
    <property type="entry name" value="Elongation factor Ts, dimerisation domain"/>
    <property type="match status" value="2"/>
</dbReference>
<dbReference type="HAMAP" id="MF_00050">
    <property type="entry name" value="EF_Ts"/>
    <property type="match status" value="1"/>
</dbReference>
<dbReference type="InterPro" id="IPR036402">
    <property type="entry name" value="EF-Ts_dimer_sf"/>
</dbReference>
<dbReference type="InterPro" id="IPR001816">
    <property type="entry name" value="Transl_elong_EFTs/EF1B"/>
</dbReference>
<dbReference type="InterPro" id="IPR014039">
    <property type="entry name" value="Transl_elong_EFTs/EF1B_dimer"/>
</dbReference>
<dbReference type="InterPro" id="IPR018101">
    <property type="entry name" value="Transl_elong_Ts_CS"/>
</dbReference>
<dbReference type="InterPro" id="IPR009060">
    <property type="entry name" value="UBA-like_sf"/>
</dbReference>
<dbReference type="NCBIfam" id="TIGR00116">
    <property type="entry name" value="tsf"/>
    <property type="match status" value="1"/>
</dbReference>
<dbReference type="PANTHER" id="PTHR11741">
    <property type="entry name" value="ELONGATION FACTOR TS"/>
    <property type="match status" value="1"/>
</dbReference>
<dbReference type="PANTHER" id="PTHR11741:SF0">
    <property type="entry name" value="ELONGATION FACTOR TS, MITOCHONDRIAL"/>
    <property type="match status" value="1"/>
</dbReference>
<dbReference type="Pfam" id="PF00889">
    <property type="entry name" value="EF_TS"/>
    <property type="match status" value="1"/>
</dbReference>
<dbReference type="SUPFAM" id="SSF54713">
    <property type="entry name" value="Elongation factor Ts (EF-Ts), dimerisation domain"/>
    <property type="match status" value="1"/>
</dbReference>
<dbReference type="SUPFAM" id="SSF46934">
    <property type="entry name" value="UBA-like"/>
    <property type="match status" value="1"/>
</dbReference>
<dbReference type="PROSITE" id="PS01126">
    <property type="entry name" value="EF_TS_1"/>
    <property type="match status" value="1"/>
</dbReference>
<dbReference type="PROSITE" id="PS01127">
    <property type="entry name" value="EF_TS_2"/>
    <property type="match status" value="1"/>
</dbReference>
<organism>
    <name type="scientific">Paramagnetospirillum magneticum (strain ATCC 700264 / AMB-1)</name>
    <name type="common">Magnetospirillum magneticum</name>
    <dbReference type="NCBI Taxonomy" id="342108"/>
    <lineage>
        <taxon>Bacteria</taxon>
        <taxon>Pseudomonadati</taxon>
        <taxon>Pseudomonadota</taxon>
        <taxon>Alphaproteobacteria</taxon>
        <taxon>Rhodospirillales</taxon>
        <taxon>Magnetospirillaceae</taxon>
        <taxon>Paramagnetospirillum</taxon>
    </lineage>
</organism>
<sequence>MAEITASLVKELREKTGAGMMDCKKALGETAGDVEAAIDWLRKKGLAAAAKKAGRVAAEGLVGIAAAGTKGVAVEVNAETDFVARNDQFQGFVASVAAVALDKGADVEAIKAAACPGTDKNVADQLTHLIATIGENMSLRRAVRLEVSAGVVASYVHTAIAPGLGKIGCLVALESTGNVDRLNEVGKQIAMHVAAANPLFLDPSVVDTSALDRERNVLTEQAQASGKPAAVIEKMVEGRIRKYYEEVCLSEQVFVIDQENKISKVLENLGKEIGAPVKLAGFARFALGEGIEKEVSDFAAEVAAQAGTRPAG</sequence>
<reference key="1">
    <citation type="journal article" date="2005" name="DNA Res.">
        <title>Complete genome sequence of the facultative anaerobic magnetotactic bacterium Magnetospirillum sp. strain AMB-1.</title>
        <authorList>
            <person name="Matsunaga T."/>
            <person name="Okamura Y."/>
            <person name="Fukuda Y."/>
            <person name="Wahyudi A.T."/>
            <person name="Murase Y."/>
            <person name="Takeyama H."/>
        </authorList>
    </citation>
    <scope>NUCLEOTIDE SEQUENCE [LARGE SCALE GENOMIC DNA]</scope>
    <source>
        <strain>ATCC 700264 / AMB-1</strain>
    </source>
</reference>
<feature type="chain" id="PRO_0000241491" description="Elongation factor Ts">
    <location>
        <begin position="1"/>
        <end position="312"/>
    </location>
</feature>
<feature type="region of interest" description="Involved in Mg(2+) ion dislocation from EF-Tu" evidence="1">
    <location>
        <begin position="80"/>
        <end position="83"/>
    </location>
</feature>
<keyword id="KW-0963">Cytoplasm</keyword>
<keyword id="KW-0251">Elongation factor</keyword>
<keyword id="KW-0648">Protein biosynthesis</keyword>
<evidence type="ECO:0000255" key="1">
    <source>
        <dbReference type="HAMAP-Rule" id="MF_00050"/>
    </source>
</evidence>
<accession>Q2W4C4</accession>
<name>EFTS_PARM1</name>